<accession>B1YRC3</accession>
<proteinExistence type="inferred from homology"/>
<feature type="chain" id="PRO_0000353304" description="DNA-directed RNA polymerase subunit beta'">
    <location>
        <begin position="1"/>
        <end position="1413"/>
    </location>
</feature>
<feature type="binding site" evidence="1">
    <location>
        <position position="70"/>
    </location>
    <ligand>
        <name>Zn(2+)</name>
        <dbReference type="ChEBI" id="CHEBI:29105"/>
        <label>1</label>
    </ligand>
</feature>
<feature type="binding site" evidence="1">
    <location>
        <position position="72"/>
    </location>
    <ligand>
        <name>Zn(2+)</name>
        <dbReference type="ChEBI" id="CHEBI:29105"/>
        <label>1</label>
    </ligand>
</feature>
<feature type="binding site" evidence="1">
    <location>
        <position position="85"/>
    </location>
    <ligand>
        <name>Zn(2+)</name>
        <dbReference type="ChEBI" id="CHEBI:29105"/>
        <label>1</label>
    </ligand>
</feature>
<feature type="binding site" evidence="1">
    <location>
        <position position="88"/>
    </location>
    <ligand>
        <name>Zn(2+)</name>
        <dbReference type="ChEBI" id="CHEBI:29105"/>
        <label>1</label>
    </ligand>
</feature>
<feature type="binding site" evidence="1">
    <location>
        <position position="460"/>
    </location>
    <ligand>
        <name>Mg(2+)</name>
        <dbReference type="ChEBI" id="CHEBI:18420"/>
    </ligand>
</feature>
<feature type="binding site" evidence="1">
    <location>
        <position position="462"/>
    </location>
    <ligand>
        <name>Mg(2+)</name>
        <dbReference type="ChEBI" id="CHEBI:18420"/>
    </ligand>
</feature>
<feature type="binding site" evidence="1">
    <location>
        <position position="464"/>
    </location>
    <ligand>
        <name>Mg(2+)</name>
        <dbReference type="ChEBI" id="CHEBI:18420"/>
    </ligand>
</feature>
<feature type="binding site" evidence="1">
    <location>
        <position position="819"/>
    </location>
    <ligand>
        <name>Zn(2+)</name>
        <dbReference type="ChEBI" id="CHEBI:29105"/>
        <label>2</label>
    </ligand>
</feature>
<feature type="binding site" evidence="1">
    <location>
        <position position="893"/>
    </location>
    <ligand>
        <name>Zn(2+)</name>
        <dbReference type="ChEBI" id="CHEBI:29105"/>
        <label>2</label>
    </ligand>
</feature>
<feature type="binding site" evidence="1">
    <location>
        <position position="900"/>
    </location>
    <ligand>
        <name>Zn(2+)</name>
        <dbReference type="ChEBI" id="CHEBI:29105"/>
        <label>2</label>
    </ligand>
</feature>
<feature type="binding site" evidence="1">
    <location>
        <position position="903"/>
    </location>
    <ligand>
        <name>Zn(2+)</name>
        <dbReference type="ChEBI" id="CHEBI:29105"/>
        <label>2</label>
    </ligand>
</feature>
<sequence length="1413" mass="156249">MKALLDLFKQVQQEEVFDAIKIGLASPDKIRSWSFGEVKKPETINYRTFKPERDGLFCAKIFGPIKDYECLCGKYKRLKHRGVICEKCGVEVTLAKVRRERMGHIELASPVAHIWFLKSLPSRLGMVLDMTLRDIERVLYFEAYVVIEPGMTPLKARQIMTEEDYYNKVEEYGDEFRAEMGAEGVRELLRAINIDEQVETLRTELKNTGSEAKIKKYAKRLKVLEAFQRSGIKPEWMILEVLPVLPPELRPLVPLDGGRFATSDLNDLYRRVINRNNRLKRLLELKAPEIIVRNEKRMLQEAVDSLLDNGRRGKAMTGANKRPLKSLADMIKGKGGRFRQNLLGKRVDYSGRSVIVVGPTLKLHQCGLPKLMALELFKPFIFNKLEVMGVATTIKAAKKEVENQTPVVWDILEEVIREHPVMLNRAPTLHRLGIQAFEPVLIEGKAIQLHPLVCAAFNADFDGDQMAVHVPLSLEAQMEARTLMLASNNVLFPANGDPSIVPSQDIVLGLYYATREAINAKGEGLSFTGVSEVIRAYENKEVELASRVNVRITEMVRNEDTSEGAPQFVPKISLYATTVGRAILSEILPHGLPFSVLNKPLKKKEISRLINTAFRKCGLRATVVFADQLMQSGFRLATRAGISICVDDMLVPPQKETIVGDAAKKVKEYDRQYMSGLVTAQERYNNVVDIWSATSEAVGKAMMEQLSTEPVTDRDGNETRQESFNSIYMMADSGARGSAVQIRQLAGMRGLMAKPDGSIIETPITANFREGLNVLQYFISTHGARKGLADTALKTANSGYLTRRLVDVTQDLVVVEDDCGTSNGVAMKALVEGGEVVEALRDRILGRVAVADVVNPETQETLYESGTLLDETAVEEIERLGIDEVRVRTPLTCETRYGLCAACYGRDLGRGSLVNVGEAVGVIAAQSIGEPGTQLTMRTFHIGGAASRAAVASSVEAKSNGIVRFTATMRYVTNAKGEQIVISRSGEALITDDIGRERERHKIPYGATLLQLDGAAIKAGTQLATWDPMTRPIITEYGGTVKFENVEEGVTVAKQIDDVTGLSTLVVIDVKRRGSQASKSVRPQVKLLDANGEEVKIPGTEHAVQIGFQVGALITVKDGQQVQVGEVLARIPTEAQKTRDITGGLPRVAELFEARSPKDAGILAEVTGTTSFGKDTKGKQRLVITDLEGNQHEFLIAKEKQVLVHDAQVVNKGEMIVDGPADPHDILRLQGIEALSRYIVDEVQDVYRLQGVKINDKHIEVIVRQMLRRVQITDNGDTRFIPGEQVERSDMLDENDRMIAEDKRPASYDNVLLGITKASLSTDSFISAASFQETTRVLTEAAIMGKRDDLRGLKENVIVGRLIPAGTGLAFHKARKAKEMSDRERFDQIAAEEAFDFGTPSTPAEEPQHPAAE</sequence>
<organism>
    <name type="scientific">Burkholderia ambifaria (strain MC40-6)</name>
    <dbReference type="NCBI Taxonomy" id="398577"/>
    <lineage>
        <taxon>Bacteria</taxon>
        <taxon>Pseudomonadati</taxon>
        <taxon>Pseudomonadota</taxon>
        <taxon>Betaproteobacteria</taxon>
        <taxon>Burkholderiales</taxon>
        <taxon>Burkholderiaceae</taxon>
        <taxon>Burkholderia</taxon>
        <taxon>Burkholderia cepacia complex</taxon>
    </lineage>
</organism>
<name>RPOC_BURA4</name>
<protein>
    <recommendedName>
        <fullName evidence="1">DNA-directed RNA polymerase subunit beta'</fullName>
        <shortName evidence="1">RNAP subunit beta'</shortName>
        <ecNumber evidence="1">2.7.7.6</ecNumber>
    </recommendedName>
    <alternativeName>
        <fullName evidence="1">RNA polymerase subunit beta'</fullName>
    </alternativeName>
    <alternativeName>
        <fullName evidence="1">Transcriptase subunit beta'</fullName>
    </alternativeName>
</protein>
<comment type="function">
    <text evidence="1">DNA-dependent RNA polymerase catalyzes the transcription of DNA into RNA using the four ribonucleoside triphosphates as substrates.</text>
</comment>
<comment type="catalytic activity">
    <reaction evidence="1">
        <text>RNA(n) + a ribonucleoside 5'-triphosphate = RNA(n+1) + diphosphate</text>
        <dbReference type="Rhea" id="RHEA:21248"/>
        <dbReference type="Rhea" id="RHEA-COMP:14527"/>
        <dbReference type="Rhea" id="RHEA-COMP:17342"/>
        <dbReference type="ChEBI" id="CHEBI:33019"/>
        <dbReference type="ChEBI" id="CHEBI:61557"/>
        <dbReference type="ChEBI" id="CHEBI:140395"/>
        <dbReference type="EC" id="2.7.7.6"/>
    </reaction>
</comment>
<comment type="cofactor">
    <cofactor evidence="1">
        <name>Mg(2+)</name>
        <dbReference type="ChEBI" id="CHEBI:18420"/>
    </cofactor>
    <text evidence="1">Binds 1 Mg(2+) ion per subunit.</text>
</comment>
<comment type="cofactor">
    <cofactor evidence="1">
        <name>Zn(2+)</name>
        <dbReference type="ChEBI" id="CHEBI:29105"/>
    </cofactor>
    <text evidence="1">Binds 2 Zn(2+) ions per subunit.</text>
</comment>
<comment type="subunit">
    <text evidence="1">The RNAP catalytic core consists of 2 alpha, 1 beta, 1 beta' and 1 omega subunit. When a sigma factor is associated with the core the holoenzyme is formed, which can initiate transcription.</text>
</comment>
<comment type="similarity">
    <text evidence="1">Belongs to the RNA polymerase beta' chain family.</text>
</comment>
<dbReference type="EC" id="2.7.7.6" evidence="1"/>
<dbReference type="EMBL" id="CP001025">
    <property type="protein sequence ID" value="ACB62770.1"/>
    <property type="molecule type" value="Genomic_DNA"/>
</dbReference>
<dbReference type="RefSeq" id="WP_006753596.1">
    <property type="nucleotide sequence ID" value="NC_010551.1"/>
</dbReference>
<dbReference type="SMR" id="B1YRC3"/>
<dbReference type="GeneID" id="93084325"/>
<dbReference type="KEGG" id="bac:BamMC406_0269"/>
<dbReference type="HOGENOM" id="CLU_000524_3_1_4"/>
<dbReference type="OrthoDB" id="9815296at2"/>
<dbReference type="Proteomes" id="UP000001680">
    <property type="component" value="Chromosome 1"/>
</dbReference>
<dbReference type="GO" id="GO:0000428">
    <property type="term" value="C:DNA-directed RNA polymerase complex"/>
    <property type="evidence" value="ECO:0007669"/>
    <property type="project" value="UniProtKB-KW"/>
</dbReference>
<dbReference type="GO" id="GO:0003677">
    <property type="term" value="F:DNA binding"/>
    <property type="evidence" value="ECO:0007669"/>
    <property type="project" value="UniProtKB-UniRule"/>
</dbReference>
<dbReference type="GO" id="GO:0003899">
    <property type="term" value="F:DNA-directed RNA polymerase activity"/>
    <property type="evidence" value="ECO:0007669"/>
    <property type="project" value="UniProtKB-UniRule"/>
</dbReference>
<dbReference type="GO" id="GO:0000287">
    <property type="term" value="F:magnesium ion binding"/>
    <property type="evidence" value="ECO:0007669"/>
    <property type="project" value="UniProtKB-UniRule"/>
</dbReference>
<dbReference type="GO" id="GO:0008270">
    <property type="term" value="F:zinc ion binding"/>
    <property type="evidence" value="ECO:0007669"/>
    <property type="project" value="UniProtKB-UniRule"/>
</dbReference>
<dbReference type="GO" id="GO:0006351">
    <property type="term" value="P:DNA-templated transcription"/>
    <property type="evidence" value="ECO:0007669"/>
    <property type="project" value="UniProtKB-UniRule"/>
</dbReference>
<dbReference type="CDD" id="cd02655">
    <property type="entry name" value="RNAP_beta'_C"/>
    <property type="match status" value="1"/>
</dbReference>
<dbReference type="CDD" id="cd01609">
    <property type="entry name" value="RNAP_beta'_N"/>
    <property type="match status" value="1"/>
</dbReference>
<dbReference type="FunFam" id="1.10.132.30:FF:000003">
    <property type="entry name" value="DNA-directed RNA polymerase subunit beta"/>
    <property type="match status" value="1"/>
</dbReference>
<dbReference type="FunFam" id="1.10.150.390:FF:000002">
    <property type="entry name" value="DNA-directed RNA polymerase subunit beta"/>
    <property type="match status" value="1"/>
</dbReference>
<dbReference type="FunFam" id="4.10.860.120:FF:000001">
    <property type="entry name" value="DNA-directed RNA polymerase subunit beta"/>
    <property type="match status" value="1"/>
</dbReference>
<dbReference type="Gene3D" id="1.10.132.30">
    <property type="match status" value="1"/>
</dbReference>
<dbReference type="Gene3D" id="1.10.150.390">
    <property type="match status" value="1"/>
</dbReference>
<dbReference type="Gene3D" id="1.10.1790.20">
    <property type="match status" value="1"/>
</dbReference>
<dbReference type="Gene3D" id="1.10.40.90">
    <property type="match status" value="1"/>
</dbReference>
<dbReference type="Gene3D" id="2.40.40.20">
    <property type="match status" value="1"/>
</dbReference>
<dbReference type="Gene3D" id="2.40.50.100">
    <property type="match status" value="3"/>
</dbReference>
<dbReference type="Gene3D" id="4.10.860.120">
    <property type="entry name" value="RNA polymerase II, clamp domain"/>
    <property type="match status" value="1"/>
</dbReference>
<dbReference type="Gene3D" id="1.10.274.100">
    <property type="entry name" value="RNA polymerase Rpb1, domain 3"/>
    <property type="match status" value="1"/>
</dbReference>
<dbReference type="HAMAP" id="MF_01322">
    <property type="entry name" value="RNApol_bact_RpoC"/>
    <property type="match status" value="1"/>
</dbReference>
<dbReference type="InterPro" id="IPR045867">
    <property type="entry name" value="DNA-dir_RpoC_beta_prime"/>
</dbReference>
<dbReference type="InterPro" id="IPR012754">
    <property type="entry name" value="DNA-dir_RpoC_beta_prime_bact"/>
</dbReference>
<dbReference type="InterPro" id="IPR000722">
    <property type="entry name" value="RNA_pol_asu"/>
</dbReference>
<dbReference type="InterPro" id="IPR006592">
    <property type="entry name" value="RNA_pol_N"/>
</dbReference>
<dbReference type="InterPro" id="IPR007080">
    <property type="entry name" value="RNA_pol_Rpb1_1"/>
</dbReference>
<dbReference type="InterPro" id="IPR007066">
    <property type="entry name" value="RNA_pol_Rpb1_3"/>
</dbReference>
<dbReference type="InterPro" id="IPR042102">
    <property type="entry name" value="RNA_pol_Rpb1_3_sf"/>
</dbReference>
<dbReference type="InterPro" id="IPR007083">
    <property type="entry name" value="RNA_pol_Rpb1_4"/>
</dbReference>
<dbReference type="InterPro" id="IPR007081">
    <property type="entry name" value="RNA_pol_Rpb1_5"/>
</dbReference>
<dbReference type="InterPro" id="IPR044893">
    <property type="entry name" value="RNA_pol_Rpb1_clamp_domain"/>
</dbReference>
<dbReference type="InterPro" id="IPR038120">
    <property type="entry name" value="Rpb1_funnel_sf"/>
</dbReference>
<dbReference type="NCBIfam" id="TIGR02386">
    <property type="entry name" value="rpoC_TIGR"/>
    <property type="match status" value="1"/>
</dbReference>
<dbReference type="PANTHER" id="PTHR19376">
    <property type="entry name" value="DNA-DIRECTED RNA POLYMERASE"/>
    <property type="match status" value="1"/>
</dbReference>
<dbReference type="PANTHER" id="PTHR19376:SF54">
    <property type="entry name" value="DNA-DIRECTED RNA POLYMERASE SUBUNIT BETA"/>
    <property type="match status" value="1"/>
</dbReference>
<dbReference type="Pfam" id="PF04997">
    <property type="entry name" value="RNA_pol_Rpb1_1"/>
    <property type="match status" value="1"/>
</dbReference>
<dbReference type="Pfam" id="PF00623">
    <property type="entry name" value="RNA_pol_Rpb1_2"/>
    <property type="match status" value="2"/>
</dbReference>
<dbReference type="Pfam" id="PF04983">
    <property type="entry name" value="RNA_pol_Rpb1_3"/>
    <property type="match status" value="1"/>
</dbReference>
<dbReference type="Pfam" id="PF05000">
    <property type="entry name" value="RNA_pol_Rpb1_4"/>
    <property type="match status" value="1"/>
</dbReference>
<dbReference type="Pfam" id="PF04998">
    <property type="entry name" value="RNA_pol_Rpb1_5"/>
    <property type="match status" value="1"/>
</dbReference>
<dbReference type="SMART" id="SM00663">
    <property type="entry name" value="RPOLA_N"/>
    <property type="match status" value="1"/>
</dbReference>
<dbReference type="SUPFAM" id="SSF64484">
    <property type="entry name" value="beta and beta-prime subunits of DNA dependent RNA-polymerase"/>
    <property type="match status" value="1"/>
</dbReference>
<gene>
    <name evidence="1" type="primary">rpoC</name>
    <name type="ordered locus">BamMC406_0269</name>
</gene>
<keyword id="KW-0240">DNA-directed RNA polymerase</keyword>
<keyword id="KW-0460">Magnesium</keyword>
<keyword id="KW-0479">Metal-binding</keyword>
<keyword id="KW-0548">Nucleotidyltransferase</keyword>
<keyword id="KW-0804">Transcription</keyword>
<keyword id="KW-0808">Transferase</keyword>
<keyword id="KW-0862">Zinc</keyword>
<evidence type="ECO:0000255" key="1">
    <source>
        <dbReference type="HAMAP-Rule" id="MF_01322"/>
    </source>
</evidence>
<reference key="1">
    <citation type="submission" date="2008-04" db="EMBL/GenBank/DDBJ databases">
        <title>Complete sequence of chromosome 1 of Burkholderia ambifaria MC40-6.</title>
        <authorList>
            <person name="Copeland A."/>
            <person name="Lucas S."/>
            <person name="Lapidus A."/>
            <person name="Glavina del Rio T."/>
            <person name="Dalin E."/>
            <person name="Tice H."/>
            <person name="Pitluck S."/>
            <person name="Chain P."/>
            <person name="Malfatti S."/>
            <person name="Shin M."/>
            <person name="Vergez L."/>
            <person name="Lang D."/>
            <person name="Schmutz J."/>
            <person name="Larimer F."/>
            <person name="Land M."/>
            <person name="Hauser L."/>
            <person name="Kyrpides N."/>
            <person name="Lykidis A."/>
            <person name="Ramette A."/>
            <person name="Konstantinidis K."/>
            <person name="Tiedje J."/>
            <person name="Richardson P."/>
        </authorList>
    </citation>
    <scope>NUCLEOTIDE SEQUENCE [LARGE SCALE GENOMIC DNA]</scope>
    <source>
        <strain>MC40-6</strain>
    </source>
</reference>